<feature type="chain" id="PRO_0000055158" description="ATP-dependent RNA helicase A">
    <location>
        <begin position="1"/>
        <end position="1380"/>
    </location>
</feature>
<feature type="domain" description="DRBM 1" evidence="1 3">
    <location>
        <begin position="3"/>
        <end position="71"/>
    </location>
</feature>
<feature type="domain" description="DRBM 2" evidence="1 3">
    <location>
        <begin position="182"/>
        <end position="254"/>
    </location>
</feature>
<feature type="domain" description="Helicase ATP-binding" evidence="1 4">
    <location>
        <begin position="400"/>
        <end position="566"/>
    </location>
</feature>
<feature type="domain" description="Helicase C-terminal" evidence="5">
    <location>
        <begin position="638"/>
        <end position="811"/>
    </location>
</feature>
<feature type="region of interest" description="Interaction with CREBBP" evidence="1">
    <location>
        <begin position="1"/>
        <end position="252"/>
    </location>
</feature>
<feature type="region of interest" description="siRNA-binding" evidence="1">
    <location>
        <begin position="5"/>
        <end position="9"/>
    </location>
</feature>
<feature type="region of interest" description="siRNA-binding" evidence="1">
    <location>
        <begin position="53"/>
        <end position="55"/>
    </location>
</feature>
<feature type="region of interest" description="Disordered" evidence="6">
    <location>
        <begin position="87"/>
        <end position="146"/>
    </location>
</feature>
<feature type="region of interest" description="siRNA-binding" evidence="1">
    <location>
        <begin position="184"/>
        <end position="188"/>
    </location>
</feature>
<feature type="region of interest" description="Interaction with BRCA1" evidence="1">
    <location>
        <begin position="232"/>
        <end position="327"/>
    </location>
</feature>
<feature type="region of interest" description="siRNA-binding" evidence="1">
    <location>
        <begin position="236"/>
        <end position="238"/>
    </location>
</feature>
<feature type="region of interest" description="Necessary for interaction with RNA polymerase II holoenzyme" evidence="1">
    <location>
        <begin position="257"/>
        <end position="666"/>
    </location>
</feature>
<feature type="region of interest" description="Necessary for interaction with H2AX" evidence="1">
    <location>
        <begin position="315"/>
        <end position="954"/>
    </location>
</feature>
<feature type="region of interest" description="MTAD" evidence="1">
    <location>
        <begin position="333"/>
        <end position="382"/>
    </location>
</feature>
<feature type="region of interest" description="Core helicase" evidence="1">
    <location>
        <begin position="400"/>
        <end position="811"/>
    </location>
</feature>
<feature type="region of interest" description="Disordered" evidence="6">
    <location>
        <begin position="588"/>
        <end position="610"/>
    </location>
</feature>
<feature type="region of interest" description="HA2" evidence="1">
    <location>
        <begin position="833"/>
        <end position="921"/>
    </location>
</feature>
<feature type="region of interest" description="OB-fold" evidence="1">
    <location>
        <begin position="960"/>
        <end position="1076"/>
    </location>
</feature>
<feature type="region of interest" description="NTD region" evidence="1">
    <location>
        <begin position="1151"/>
        <end position="1366"/>
    </location>
</feature>
<feature type="region of interest" description="RGG" evidence="1">
    <location>
        <begin position="1152"/>
        <end position="1380"/>
    </location>
</feature>
<feature type="short sequence motif" description="DEAH box">
    <location>
        <begin position="513"/>
        <end position="516"/>
    </location>
</feature>
<feature type="short sequence motif" description="Nuclear localization signal (NLS1)" evidence="2">
    <location>
        <begin position="588"/>
        <end position="597"/>
    </location>
</feature>
<feature type="short sequence motif" description="Nuclear localization signal (NLS2)" evidence="1">
    <location>
        <begin position="1156"/>
        <end position="1174"/>
    </location>
</feature>
<feature type="compositionally biased region" description="Low complexity" evidence="6">
    <location>
        <begin position="93"/>
        <end position="109"/>
    </location>
</feature>
<feature type="compositionally biased region" description="Polar residues" evidence="6">
    <location>
        <begin position="125"/>
        <end position="134"/>
    </location>
</feature>
<feature type="binding site" evidence="1 4">
    <location>
        <begin position="413"/>
        <end position="421"/>
    </location>
    <ligand>
        <name>ATP</name>
        <dbReference type="ChEBI" id="CHEBI:30616"/>
    </ligand>
</feature>
<feature type="binding site" evidence="1">
    <location>
        <position position="420"/>
    </location>
    <ligand>
        <name>Mn(2+)</name>
        <dbReference type="ChEBI" id="CHEBI:29035"/>
    </ligand>
</feature>
<feature type="binding site" evidence="1">
    <location>
        <position position="514"/>
    </location>
    <ligand>
        <name>Mn(2+)</name>
        <dbReference type="ChEBI" id="CHEBI:29035"/>
    </ligand>
</feature>
<feature type="modified residue" description="Phosphoserine" evidence="1">
    <location>
        <position position="127"/>
    </location>
</feature>
<feature type="modified residue" description="Phosphoserine" evidence="24">
    <location>
        <position position="136"/>
    </location>
</feature>
<feature type="modified residue" description="N6-acetyllysine; alternate" evidence="25">
    <location>
        <position position="148"/>
    </location>
</feature>
<feature type="modified residue" description="N6-methyllysine; alternate" evidence="1">
    <location>
        <position position="148"/>
    </location>
</feature>
<feature type="modified residue" description="N6-acetyllysine" evidence="1">
    <location>
        <position position="193"/>
    </location>
</feature>
<feature type="modified residue" description="N6-acetyllysine" evidence="1">
    <location>
        <position position="201"/>
    </location>
</feature>
<feature type="modified residue" description="Phosphoserine" evidence="1">
    <location>
        <position position="323"/>
    </location>
</feature>
<feature type="modified residue" description="Phosphoserine" evidence="1">
    <location>
        <position position="451"/>
    </location>
</feature>
<feature type="modified residue" description="Phosphoserine" evidence="1">
    <location>
        <position position="508"/>
    </location>
</feature>
<feature type="modified residue" description="N6-acetyllysine" evidence="1">
    <location>
        <position position="1026"/>
    </location>
</feature>
<feature type="modified residue" description="Asymmetric dimethylarginine" evidence="26">
    <location>
        <position position="1167"/>
    </location>
</feature>
<feature type="modified residue" description="Omega-N-methylarginine" evidence="1">
    <location>
        <position position="1176"/>
    </location>
</feature>
<feature type="modified residue" description="Asymmetric dimethylarginine" evidence="26">
    <location>
        <position position="1312"/>
    </location>
</feature>
<feature type="modified residue" description="Asymmetric dimethylarginine" evidence="26">
    <location>
        <position position="1323"/>
    </location>
</feature>
<feature type="modified residue" description="Asymmetric dimethylarginine" evidence="26">
    <location>
        <position position="1339"/>
    </location>
</feature>
<feature type="modified residue" description="Asymmetric dimethylarginine" evidence="26">
    <location>
        <position position="1346"/>
    </location>
</feature>
<feature type="modified residue" description="Asymmetric dimethylarginine" evidence="26">
    <location>
        <position position="1353"/>
    </location>
</feature>
<feature type="modified residue" description="Asymmetric dimethylarginine" evidence="26">
    <location>
        <position position="1361"/>
    </location>
</feature>
<feature type="modified residue" description="Asymmetric dimethylarginine" evidence="26">
    <location>
        <position position="1372"/>
    </location>
</feature>
<feature type="cross-link" description="Glycyl lysine isopeptide (Lys-Gly) (interchain with G-Cter in SUMO2)" evidence="1">
    <location>
        <position position="699"/>
    </location>
</feature>
<feature type="splice variant" id="VSP_014778" description="In isoform 3." evidence="16">
    <location>
        <begin position="1"/>
        <end position="216"/>
    </location>
</feature>
<feature type="splice variant" id="VSP_014779" description="In isoform 2." evidence="17">
    <original>E</original>
    <variation>EA</variation>
    <location>
        <position position="123"/>
    </location>
</feature>
<feature type="mutagenesis site" description="Mice show a reduced body size, reduced emotionality, and cardiac conduction abnormalities." evidence="14">
    <original>G</original>
    <variation>R</variation>
    <location>
        <position position="416"/>
    </location>
</feature>
<feature type="sequence conflict" description="In Ref. 1; AAC05725." evidence="20" ref="1">
    <original>A</original>
    <variation>R</variation>
    <location>
        <position position="46"/>
    </location>
</feature>
<feature type="sequence conflict" description="In Ref. 1; AAC05725/AAC05301." evidence="20" ref="1">
    <original>S</original>
    <variation>A</variation>
    <location>
        <position position="136"/>
    </location>
</feature>
<feature type="sequence conflict" description="In Ref. 2." evidence="20" ref="2">
    <original>L</original>
    <variation>V</variation>
    <location>
        <position position="187"/>
    </location>
</feature>
<feature type="sequence conflict" description="In Ref. 1; AAC05725." evidence="20" ref="1">
    <original>Q</original>
    <variation>H</variation>
    <location>
        <position position="189"/>
    </location>
</feature>
<feature type="sequence conflict" description="In Ref. 4; BAB28848." evidence="20" ref="4">
    <original>R</original>
    <variation>G</variation>
    <location>
        <position position="211"/>
    </location>
</feature>
<feature type="sequence conflict" description="In Ref. 1; AAC05725." evidence="20" ref="1">
    <original>S</original>
    <variation>C</variation>
    <location>
        <position position="235"/>
    </location>
</feature>
<feature type="sequence conflict" description="In Ref. 1; AAC05725." evidence="20" ref="1">
    <original>V</original>
    <variation>C</variation>
    <location>
        <position position="257"/>
    </location>
</feature>
<feature type="sequence conflict" description="In Ref. 1; AAC05725." evidence="20" ref="1">
    <original>S</original>
    <variation>P</variation>
    <location>
        <position position="281"/>
    </location>
</feature>
<feature type="sequence conflict" description="In Ref. 5; AAB72087." evidence="20" ref="5">
    <original>N</original>
    <variation>M</variation>
    <location>
        <position position="674"/>
    </location>
</feature>
<feature type="sequence conflict" description="In Ref. 5; AAB72087." evidence="20" ref="5">
    <original>T</original>
    <variation>I</variation>
    <location>
        <position position="748"/>
    </location>
</feature>
<feature type="sequence conflict" description="In Ref. 5; AAB72087." evidence="20" ref="5">
    <original>I</original>
    <variation>V</variation>
    <location>
        <position position="831"/>
    </location>
</feature>
<feature type="helix" evidence="28">
    <location>
        <begin position="5"/>
        <end position="14"/>
    </location>
</feature>
<feature type="strand" evidence="28">
    <location>
        <begin position="20"/>
        <end position="27"/>
    </location>
</feature>
<feature type="strand" evidence="28">
    <location>
        <begin position="29"/>
        <end position="39"/>
    </location>
</feature>
<feature type="strand" evidence="28">
    <location>
        <begin position="47"/>
        <end position="53"/>
    </location>
</feature>
<feature type="helix" evidence="28">
    <location>
        <begin position="54"/>
        <end position="72"/>
    </location>
</feature>
<feature type="turn" evidence="28">
    <location>
        <begin position="77"/>
        <end position="79"/>
    </location>
</feature>
<feature type="helix" evidence="27">
    <location>
        <begin position="172"/>
        <end position="175"/>
    </location>
</feature>
<feature type="helix" evidence="27">
    <location>
        <begin position="180"/>
        <end position="193"/>
    </location>
</feature>
<feature type="strand" evidence="27">
    <location>
        <begin position="201"/>
        <end position="206"/>
    </location>
</feature>
<feature type="strand" evidence="27">
    <location>
        <begin position="212"/>
        <end position="221"/>
    </location>
</feature>
<feature type="turn" evidence="27">
    <location>
        <begin position="222"/>
        <end position="225"/>
    </location>
</feature>
<feature type="strand" evidence="27">
    <location>
        <begin position="226"/>
        <end position="231"/>
    </location>
</feature>
<feature type="helix" evidence="27">
    <location>
        <begin position="237"/>
        <end position="255"/>
    </location>
</feature>
<feature type="modified residue" description="Phosphoserine" evidence="22 23 24">
    <location sequence="O70133-2">
        <position position="137"/>
    </location>
</feature>
<dbReference type="EC" id="3.6.4.13" evidence="1"/>
<dbReference type="EMBL" id="U91922">
    <property type="protein sequence ID" value="AAC05725.1"/>
    <property type="molecule type" value="mRNA"/>
</dbReference>
<dbReference type="EMBL" id="AF023530">
    <property type="protein sequence ID" value="AAC05301.1"/>
    <property type="molecule type" value="Genomic_DNA"/>
</dbReference>
<dbReference type="EMBL" id="AY512925">
    <property type="protein sequence ID" value="AAR87796.1"/>
    <property type="status" value="ALT_SEQ"/>
    <property type="molecule type" value="mRNA"/>
</dbReference>
<dbReference type="EMBL" id="BC089159">
    <property type="protein sequence ID" value="AAH89159.1"/>
    <property type="status" value="ALT_SEQ"/>
    <property type="molecule type" value="mRNA"/>
</dbReference>
<dbReference type="EMBL" id="AK013423">
    <property type="protein sequence ID" value="BAB28848.1"/>
    <property type="molecule type" value="mRNA"/>
</dbReference>
<dbReference type="EMBL" id="U92080">
    <property type="protein sequence ID" value="AAB72087.1"/>
    <property type="molecule type" value="mRNA"/>
</dbReference>
<dbReference type="RefSeq" id="NP_031868.2">
    <property type="nucleotide sequence ID" value="NM_007842.2"/>
</dbReference>
<dbReference type="PDB" id="1UIL">
    <property type="method" value="NMR"/>
    <property type="chains" value="A=163-262"/>
</dbReference>
<dbReference type="PDB" id="1WHQ">
    <property type="method" value="NMR"/>
    <property type="chains" value="A=4-89"/>
</dbReference>
<dbReference type="PDB" id="2RS6">
    <property type="method" value="NMR"/>
    <property type="chains" value="A=4-89"/>
</dbReference>
<dbReference type="PDB" id="2RS7">
    <property type="method" value="NMR"/>
    <property type="chains" value="A=163-262"/>
</dbReference>
<dbReference type="PDBsum" id="1UIL"/>
<dbReference type="PDBsum" id="1WHQ"/>
<dbReference type="PDBsum" id="2RS6"/>
<dbReference type="PDBsum" id="2RS7"/>
<dbReference type="BMRB" id="O70133"/>
<dbReference type="SMR" id="O70133"/>
<dbReference type="BioGRID" id="199088">
    <property type="interactions" value="107"/>
</dbReference>
<dbReference type="ComplexPortal" id="CPX-1089">
    <property type="entry name" value="CRD-mediated mRNA stability complex"/>
</dbReference>
<dbReference type="CORUM" id="O70133"/>
<dbReference type="FunCoup" id="O70133">
    <property type="interactions" value="4003"/>
</dbReference>
<dbReference type="IntAct" id="O70133">
    <property type="interactions" value="19"/>
</dbReference>
<dbReference type="MINT" id="O70133"/>
<dbReference type="STRING" id="10090.ENSMUSP00000139825"/>
<dbReference type="GlyGen" id="O70133">
    <property type="glycosylation" value="4 sites, 2 N-linked glycans (2 sites), 1 O-linked glycan (1 site)"/>
</dbReference>
<dbReference type="iPTMnet" id="O70133"/>
<dbReference type="PhosphoSitePlus" id="O70133"/>
<dbReference type="SwissPalm" id="O70133"/>
<dbReference type="jPOST" id="O70133"/>
<dbReference type="PaxDb" id="10090-ENSMUSP00000038135"/>
<dbReference type="PeptideAtlas" id="O70133"/>
<dbReference type="ProteomicsDB" id="279535">
    <molecule id="O70133-1"/>
</dbReference>
<dbReference type="ProteomicsDB" id="279536">
    <molecule id="O70133-2"/>
</dbReference>
<dbReference type="ProteomicsDB" id="279537">
    <molecule id="O70133-3"/>
</dbReference>
<dbReference type="Pumba" id="O70133"/>
<dbReference type="DNASU" id="13211"/>
<dbReference type="GeneID" id="13211"/>
<dbReference type="KEGG" id="mmu:13211"/>
<dbReference type="AGR" id="MGI:108177"/>
<dbReference type="CTD" id="1660"/>
<dbReference type="MGI" id="MGI:108177">
    <property type="gene designation" value="Dhx9"/>
</dbReference>
<dbReference type="eggNOG" id="KOG0921">
    <property type="taxonomic scope" value="Eukaryota"/>
</dbReference>
<dbReference type="InParanoid" id="O70133"/>
<dbReference type="PhylomeDB" id="O70133"/>
<dbReference type="BRENDA" id="3.6.4.13">
    <property type="organism ID" value="3474"/>
</dbReference>
<dbReference type="Reactome" id="R-MMU-1810476">
    <property type="pathway name" value="RIP-mediated NFkB activation via ZBP1"/>
</dbReference>
<dbReference type="Reactome" id="R-MMU-3134963">
    <property type="pathway name" value="DEx/H-box helicases activate type I IFN and inflammatory cytokines production"/>
</dbReference>
<dbReference type="Reactome" id="R-MMU-72163">
    <property type="pathway name" value="mRNA Splicing - Major Pathway"/>
</dbReference>
<dbReference type="Reactome" id="R-MMU-9833482">
    <property type="pathway name" value="PKR-mediated signaling"/>
</dbReference>
<dbReference type="BioGRID-ORCS" id="13211">
    <property type="hits" value="23 hits in 60 CRISPR screens"/>
</dbReference>
<dbReference type="CD-CODE" id="DE1E139C">
    <property type="entry name" value="Chromatoid body"/>
</dbReference>
<dbReference type="ChiTaRS" id="Dhx9">
    <property type="organism name" value="mouse"/>
</dbReference>
<dbReference type="EvolutionaryTrace" id="O70133"/>
<dbReference type="PRO" id="PR:O70133"/>
<dbReference type="Proteomes" id="UP000000589">
    <property type="component" value="Unplaced"/>
</dbReference>
<dbReference type="RNAct" id="O70133">
    <property type="molecule type" value="protein"/>
</dbReference>
<dbReference type="GO" id="GO:0015629">
    <property type="term" value="C:actin cytoskeleton"/>
    <property type="evidence" value="ECO:0000250"/>
    <property type="project" value="UniProtKB"/>
</dbReference>
<dbReference type="GO" id="GO:0005813">
    <property type="term" value="C:centrosome"/>
    <property type="evidence" value="ECO:0007669"/>
    <property type="project" value="UniProtKB-SubCell"/>
</dbReference>
<dbReference type="GO" id="GO:0070937">
    <property type="term" value="C:CRD-mediated mRNA stability complex"/>
    <property type="evidence" value="ECO:0000250"/>
    <property type="project" value="UniProtKB"/>
</dbReference>
<dbReference type="GO" id="GO:0005737">
    <property type="term" value="C:cytoplasm"/>
    <property type="evidence" value="ECO:0000250"/>
    <property type="project" value="UniProtKB"/>
</dbReference>
<dbReference type="GO" id="GO:0036464">
    <property type="term" value="C:cytoplasmic ribonucleoprotein granule"/>
    <property type="evidence" value="ECO:0000250"/>
    <property type="project" value="UniProtKB"/>
</dbReference>
<dbReference type="GO" id="GO:0005829">
    <property type="term" value="C:cytosol"/>
    <property type="evidence" value="ECO:0000266"/>
    <property type="project" value="ComplexPortal"/>
</dbReference>
<dbReference type="GO" id="GO:0016604">
    <property type="term" value="C:nuclear body"/>
    <property type="evidence" value="ECO:0000250"/>
    <property type="project" value="UniProtKB"/>
</dbReference>
<dbReference type="GO" id="GO:0097165">
    <property type="term" value="C:nuclear stress granule"/>
    <property type="evidence" value="ECO:0000250"/>
    <property type="project" value="UniProtKB"/>
</dbReference>
<dbReference type="GO" id="GO:0005730">
    <property type="term" value="C:nucleolus"/>
    <property type="evidence" value="ECO:0000314"/>
    <property type="project" value="MGI"/>
</dbReference>
<dbReference type="GO" id="GO:0005654">
    <property type="term" value="C:nucleoplasm"/>
    <property type="evidence" value="ECO:0000250"/>
    <property type="project" value="UniProtKB"/>
</dbReference>
<dbReference type="GO" id="GO:0005726">
    <property type="term" value="C:perichromatin fibrils"/>
    <property type="evidence" value="ECO:0000250"/>
    <property type="project" value="UniProtKB"/>
</dbReference>
<dbReference type="GO" id="GO:1990904">
    <property type="term" value="C:ribonucleoprotein complex"/>
    <property type="evidence" value="ECO:0000250"/>
    <property type="project" value="UniProtKB"/>
</dbReference>
<dbReference type="GO" id="GO:0016442">
    <property type="term" value="C:RISC complex"/>
    <property type="evidence" value="ECO:0000250"/>
    <property type="project" value="UniProtKB"/>
</dbReference>
<dbReference type="GO" id="GO:0070578">
    <property type="term" value="C:RISC-loading complex"/>
    <property type="evidence" value="ECO:0000250"/>
    <property type="project" value="UniProtKB"/>
</dbReference>
<dbReference type="GO" id="GO:0043138">
    <property type="term" value="F:3'-5' DNA helicase activity"/>
    <property type="evidence" value="ECO:0000250"/>
    <property type="project" value="UniProtKB"/>
</dbReference>
<dbReference type="GO" id="GO:0033679">
    <property type="term" value="F:3'-5' DNA/RNA helicase activity"/>
    <property type="evidence" value="ECO:0000250"/>
    <property type="project" value="UniProtKB"/>
</dbReference>
<dbReference type="GO" id="GO:0034458">
    <property type="term" value="F:3'-5' RNA helicase activity"/>
    <property type="evidence" value="ECO:0000250"/>
    <property type="project" value="UniProtKB"/>
</dbReference>
<dbReference type="GO" id="GO:0005524">
    <property type="term" value="F:ATP binding"/>
    <property type="evidence" value="ECO:0007669"/>
    <property type="project" value="UniProtKB-KW"/>
</dbReference>
<dbReference type="GO" id="GO:0016887">
    <property type="term" value="F:ATP hydrolysis activity"/>
    <property type="evidence" value="ECO:0000250"/>
    <property type="project" value="UniProtKB"/>
</dbReference>
<dbReference type="GO" id="GO:0140640">
    <property type="term" value="F:catalytic activity, acting on a nucleic acid"/>
    <property type="evidence" value="ECO:0000250"/>
    <property type="project" value="UniProtKB"/>
</dbReference>
<dbReference type="GO" id="GO:0031490">
    <property type="term" value="F:chromatin DNA binding"/>
    <property type="evidence" value="ECO:0000250"/>
    <property type="project" value="UniProtKB"/>
</dbReference>
<dbReference type="GO" id="GO:0003677">
    <property type="term" value="F:DNA binding"/>
    <property type="evidence" value="ECO:0000250"/>
    <property type="project" value="UniProtKB"/>
</dbReference>
<dbReference type="GO" id="GO:0003678">
    <property type="term" value="F:DNA helicase activity"/>
    <property type="evidence" value="ECO:0000250"/>
    <property type="project" value="UniProtKB"/>
</dbReference>
<dbReference type="GO" id="GO:0003688">
    <property type="term" value="F:DNA replication origin binding"/>
    <property type="evidence" value="ECO:0000250"/>
    <property type="project" value="UniProtKB"/>
</dbReference>
<dbReference type="GO" id="GO:0003690">
    <property type="term" value="F:double-stranded DNA binding"/>
    <property type="evidence" value="ECO:0000250"/>
    <property type="project" value="UniProtKB"/>
</dbReference>
<dbReference type="GO" id="GO:0003725">
    <property type="term" value="F:double-stranded RNA binding"/>
    <property type="evidence" value="ECO:0000250"/>
    <property type="project" value="UniProtKB"/>
</dbReference>
<dbReference type="GO" id="GO:0061676">
    <property type="term" value="F:importin-alpha family protein binding"/>
    <property type="evidence" value="ECO:0000250"/>
    <property type="project" value="UniProtKB"/>
</dbReference>
<dbReference type="GO" id="GO:0046872">
    <property type="term" value="F:metal ion binding"/>
    <property type="evidence" value="ECO:0007669"/>
    <property type="project" value="UniProtKB-KW"/>
</dbReference>
<dbReference type="GO" id="GO:0003729">
    <property type="term" value="F:mRNA binding"/>
    <property type="evidence" value="ECO:0000250"/>
    <property type="project" value="UniProtKB"/>
</dbReference>
<dbReference type="GO" id="GO:0047429">
    <property type="term" value="F:nucleoside triphosphate diphosphatase activity"/>
    <property type="evidence" value="ECO:0000250"/>
    <property type="project" value="UniProtKB"/>
</dbReference>
<dbReference type="GO" id="GO:1990841">
    <property type="term" value="F:promoter-specific chromatin binding"/>
    <property type="evidence" value="ECO:0000250"/>
    <property type="project" value="UniProtKB"/>
</dbReference>
<dbReference type="GO" id="GO:0001069">
    <property type="term" value="F:regulatory region RNA binding"/>
    <property type="evidence" value="ECO:0000314"/>
    <property type="project" value="UniProtKB"/>
</dbReference>
<dbReference type="GO" id="GO:0017111">
    <property type="term" value="F:ribonucleoside triphosphate phosphatase activity"/>
    <property type="evidence" value="ECO:0000250"/>
    <property type="project" value="UniProtKB"/>
</dbReference>
<dbReference type="GO" id="GO:1905172">
    <property type="term" value="F:RISC complex binding"/>
    <property type="evidence" value="ECO:0000250"/>
    <property type="project" value="UniProtKB"/>
</dbReference>
<dbReference type="GO" id="GO:0003723">
    <property type="term" value="F:RNA binding"/>
    <property type="evidence" value="ECO:0000250"/>
    <property type="project" value="UniProtKB"/>
</dbReference>
<dbReference type="GO" id="GO:0003724">
    <property type="term" value="F:RNA helicase activity"/>
    <property type="evidence" value="ECO:0000250"/>
    <property type="project" value="UniProtKB"/>
</dbReference>
<dbReference type="GO" id="GO:0070063">
    <property type="term" value="F:RNA polymerase binding"/>
    <property type="evidence" value="ECO:0000250"/>
    <property type="project" value="UniProtKB"/>
</dbReference>
<dbReference type="GO" id="GO:0000978">
    <property type="term" value="F:RNA polymerase II cis-regulatory region sequence-specific DNA binding"/>
    <property type="evidence" value="ECO:0000250"/>
    <property type="project" value="UniProtKB"/>
</dbReference>
<dbReference type="GO" id="GO:0035613">
    <property type="term" value="F:RNA stem-loop binding"/>
    <property type="evidence" value="ECO:0000250"/>
    <property type="project" value="UniProtKB"/>
</dbReference>
<dbReference type="GO" id="GO:1990825">
    <property type="term" value="F:sequence-specific mRNA binding"/>
    <property type="evidence" value="ECO:0000250"/>
    <property type="project" value="UniProtKB"/>
</dbReference>
<dbReference type="GO" id="GO:1990518">
    <property type="term" value="F:single-stranded 3'-5' DNA helicase activity"/>
    <property type="evidence" value="ECO:0000250"/>
    <property type="project" value="UniProtKB"/>
</dbReference>
<dbReference type="GO" id="GO:0003697">
    <property type="term" value="F:single-stranded DNA binding"/>
    <property type="evidence" value="ECO:0000250"/>
    <property type="project" value="UniProtKB"/>
</dbReference>
<dbReference type="GO" id="GO:0003727">
    <property type="term" value="F:single-stranded RNA binding"/>
    <property type="evidence" value="ECO:0000250"/>
    <property type="project" value="UniProtKB"/>
</dbReference>
<dbReference type="GO" id="GO:0003713">
    <property type="term" value="F:transcription coactivator activity"/>
    <property type="evidence" value="ECO:0000250"/>
    <property type="project" value="UniProtKB"/>
</dbReference>
<dbReference type="GO" id="GO:0045142">
    <property type="term" value="F:triplex DNA binding"/>
    <property type="evidence" value="ECO:0000250"/>
    <property type="project" value="UniProtKB"/>
</dbReference>
<dbReference type="GO" id="GO:0000380">
    <property type="term" value="P:alternative mRNA splicing, via spliceosome"/>
    <property type="evidence" value="ECO:0000250"/>
    <property type="project" value="UniProtKB"/>
</dbReference>
<dbReference type="GO" id="GO:0071360">
    <property type="term" value="P:cellular response to exogenous dsRNA"/>
    <property type="evidence" value="ECO:0000250"/>
    <property type="project" value="UniProtKB"/>
</dbReference>
<dbReference type="GO" id="GO:0034605">
    <property type="term" value="P:cellular response to heat"/>
    <property type="evidence" value="ECO:0000314"/>
    <property type="project" value="MGI"/>
</dbReference>
<dbReference type="GO" id="GO:0006325">
    <property type="term" value="P:chromatin organization"/>
    <property type="evidence" value="ECO:0000250"/>
    <property type="project" value="UniProtKB"/>
</dbReference>
<dbReference type="GO" id="GO:0007623">
    <property type="term" value="P:circadian rhythm"/>
    <property type="evidence" value="ECO:0000315"/>
    <property type="project" value="MGI"/>
</dbReference>
<dbReference type="GO" id="GO:0070934">
    <property type="term" value="P:CRD-mediated mRNA stabilization"/>
    <property type="evidence" value="ECO:0000266"/>
    <property type="project" value="ComplexPortal"/>
</dbReference>
<dbReference type="GO" id="GO:0006353">
    <property type="term" value="P:DNA-templated transcription termination"/>
    <property type="evidence" value="ECO:0007669"/>
    <property type="project" value="UniProtKB-KW"/>
</dbReference>
<dbReference type="GO" id="GO:0045087">
    <property type="term" value="P:innate immune response"/>
    <property type="evidence" value="ECO:0007669"/>
    <property type="project" value="UniProtKB-KW"/>
</dbReference>
<dbReference type="GO" id="GO:0035195">
    <property type="term" value="P:miRNA-mediated post-transcriptional gene silencing"/>
    <property type="evidence" value="ECO:0000250"/>
    <property type="project" value="UniProtKB"/>
</dbReference>
<dbReference type="GO" id="GO:0051028">
    <property type="term" value="P:mRNA transport"/>
    <property type="evidence" value="ECO:0007669"/>
    <property type="project" value="UniProtKB-KW"/>
</dbReference>
<dbReference type="GO" id="GO:1900152">
    <property type="term" value="P:negative regulation of nuclear-transcribed mRNA catabolic process, deadenylation-dependent decay"/>
    <property type="evidence" value="ECO:0000266"/>
    <property type="project" value="ComplexPortal"/>
</dbReference>
<dbReference type="GO" id="GO:2000767">
    <property type="term" value="P:positive regulation of cytoplasmic translation"/>
    <property type="evidence" value="ECO:0000250"/>
    <property type="project" value="UniProtKB"/>
</dbReference>
<dbReference type="GO" id="GO:0045739">
    <property type="term" value="P:positive regulation of DNA repair"/>
    <property type="evidence" value="ECO:0000250"/>
    <property type="project" value="UniProtKB"/>
</dbReference>
<dbReference type="GO" id="GO:0045740">
    <property type="term" value="P:positive regulation of DNA replication"/>
    <property type="evidence" value="ECO:0000250"/>
    <property type="project" value="UniProtKB"/>
</dbReference>
<dbReference type="GO" id="GO:0048146">
    <property type="term" value="P:positive regulation of fibroblast proliferation"/>
    <property type="evidence" value="ECO:0000250"/>
    <property type="project" value="UniProtKB"/>
</dbReference>
<dbReference type="GO" id="GO:0050729">
    <property type="term" value="P:positive regulation of inflammatory response"/>
    <property type="evidence" value="ECO:0000315"/>
    <property type="project" value="UniProtKB"/>
</dbReference>
<dbReference type="GO" id="GO:0045089">
    <property type="term" value="P:positive regulation of innate immune response"/>
    <property type="evidence" value="ECO:0000315"/>
    <property type="project" value="UniProtKB"/>
</dbReference>
<dbReference type="GO" id="GO:0032727">
    <property type="term" value="P:positive regulation of interferon-alpha production"/>
    <property type="evidence" value="ECO:0000250"/>
    <property type="project" value="UniProtKB"/>
</dbReference>
<dbReference type="GO" id="GO:0032728">
    <property type="term" value="P:positive regulation of interferon-beta production"/>
    <property type="evidence" value="ECO:0000250"/>
    <property type="project" value="UniProtKB"/>
</dbReference>
<dbReference type="GO" id="GO:0032741">
    <property type="term" value="P:positive regulation of interleukin-18 production"/>
    <property type="evidence" value="ECO:0000315"/>
    <property type="project" value="UniProtKB"/>
</dbReference>
<dbReference type="GO" id="GO:0032755">
    <property type="term" value="P:positive regulation of interleukin-6 production"/>
    <property type="evidence" value="ECO:0000250"/>
    <property type="project" value="UniProtKB"/>
</dbReference>
<dbReference type="GO" id="GO:0051092">
    <property type="term" value="P:positive regulation of NF-kappaB transcription factor activity"/>
    <property type="evidence" value="ECO:0000250"/>
    <property type="project" value="UniProtKB"/>
</dbReference>
<dbReference type="GO" id="GO:0060760">
    <property type="term" value="P:positive regulation of response to cytokine stimulus"/>
    <property type="evidence" value="ECO:0000250"/>
    <property type="project" value="UniProtKB"/>
</dbReference>
<dbReference type="GO" id="GO:0046833">
    <property type="term" value="P:positive regulation of RNA export from nucleus"/>
    <property type="evidence" value="ECO:0000250"/>
    <property type="project" value="UniProtKB"/>
</dbReference>
<dbReference type="GO" id="GO:0045944">
    <property type="term" value="P:positive regulation of transcription by RNA polymerase II"/>
    <property type="evidence" value="ECO:0000250"/>
    <property type="project" value="UniProtKB"/>
</dbReference>
<dbReference type="GO" id="GO:0032760">
    <property type="term" value="P:positive regulation of tumor necrosis factor production"/>
    <property type="evidence" value="ECO:0000250"/>
    <property type="project" value="UniProtKB"/>
</dbReference>
<dbReference type="GO" id="GO:0070269">
    <property type="term" value="P:pyroptotic inflammatory response"/>
    <property type="evidence" value="ECO:0000315"/>
    <property type="project" value="UniProtKB"/>
</dbReference>
<dbReference type="GO" id="GO:2000765">
    <property type="term" value="P:regulation of cytoplasmic translation"/>
    <property type="evidence" value="ECO:0000250"/>
    <property type="project" value="UniProtKB"/>
</dbReference>
<dbReference type="GO" id="GO:0050691">
    <property type="term" value="P:regulation of defense response to virus by host"/>
    <property type="evidence" value="ECO:0000315"/>
    <property type="project" value="UniProtKB"/>
</dbReference>
<dbReference type="GO" id="GO:0050684">
    <property type="term" value="P:regulation of mRNA processing"/>
    <property type="evidence" value="ECO:0000250"/>
    <property type="project" value="UniProtKB"/>
</dbReference>
<dbReference type="GO" id="GO:0070922">
    <property type="term" value="P:RISC complex assembly"/>
    <property type="evidence" value="ECO:0000250"/>
    <property type="project" value="UniProtKB"/>
</dbReference>
<dbReference type="CDD" id="cd17972">
    <property type="entry name" value="DEXHc_DHX9"/>
    <property type="match status" value="1"/>
</dbReference>
<dbReference type="CDD" id="cd19854">
    <property type="entry name" value="DSRM_DHX9_rpt1"/>
    <property type="match status" value="1"/>
</dbReference>
<dbReference type="CDD" id="cd19855">
    <property type="entry name" value="DSRM_DHX9_rpt2"/>
    <property type="match status" value="1"/>
</dbReference>
<dbReference type="CDD" id="cd18791">
    <property type="entry name" value="SF2_C_RHA"/>
    <property type="match status" value="1"/>
</dbReference>
<dbReference type="FunFam" id="3.30.160.20:FF:000026">
    <property type="entry name" value="ATP-dependent RNA helicase A"/>
    <property type="match status" value="1"/>
</dbReference>
<dbReference type="FunFam" id="3.30.160.20:FF:000028">
    <property type="entry name" value="ATP-dependent RNA helicase A"/>
    <property type="match status" value="1"/>
</dbReference>
<dbReference type="FunFam" id="3.40.50.300:FF:000677">
    <property type="entry name" value="ATP-dependent RNA helicase A"/>
    <property type="match status" value="1"/>
</dbReference>
<dbReference type="FunFam" id="1.20.120.1080:FF:000006">
    <property type="entry name" value="ATP-dependent RNA helicase A protein"/>
    <property type="match status" value="1"/>
</dbReference>
<dbReference type="FunFam" id="3.40.50.300:FF:000284">
    <property type="entry name" value="probable ATP-dependent RNA helicase YTHDC2"/>
    <property type="match status" value="1"/>
</dbReference>
<dbReference type="Gene3D" id="1.20.120.1080">
    <property type="match status" value="1"/>
</dbReference>
<dbReference type="Gene3D" id="3.30.160.20">
    <property type="match status" value="2"/>
</dbReference>
<dbReference type="Gene3D" id="3.40.50.300">
    <property type="entry name" value="P-loop containing nucleotide triphosphate hydrolases"/>
    <property type="match status" value="2"/>
</dbReference>
<dbReference type="InterPro" id="IPR011709">
    <property type="entry name" value="DEAD-box_helicase_OB_fold"/>
</dbReference>
<dbReference type="InterPro" id="IPR011545">
    <property type="entry name" value="DEAD/DEAH_box_helicase_dom"/>
</dbReference>
<dbReference type="InterPro" id="IPR044447">
    <property type="entry name" value="DHX9_DEXHc"/>
</dbReference>
<dbReference type="InterPro" id="IPR044445">
    <property type="entry name" value="DHX9_DSRM_1"/>
</dbReference>
<dbReference type="InterPro" id="IPR044446">
    <property type="entry name" value="DHX9_DSRM_2"/>
</dbReference>
<dbReference type="InterPro" id="IPR002464">
    <property type="entry name" value="DNA/RNA_helicase_DEAH_CS"/>
</dbReference>
<dbReference type="InterPro" id="IPR014720">
    <property type="entry name" value="dsRBD_dom"/>
</dbReference>
<dbReference type="InterPro" id="IPR048333">
    <property type="entry name" value="HA2_WH"/>
</dbReference>
<dbReference type="InterPro" id="IPR007502">
    <property type="entry name" value="Helicase-assoc_dom"/>
</dbReference>
<dbReference type="InterPro" id="IPR014001">
    <property type="entry name" value="Helicase_ATP-bd"/>
</dbReference>
<dbReference type="InterPro" id="IPR001650">
    <property type="entry name" value="Helicase_C-like"/>
</dbReference>
<dbReference type="InterPro" id="IPR027417">
    <property type="entry name" value="P-loop_NTPase"/>
</dbReference>
<dbReference type="PANTHER" id="PTHR18934">
    <property type="entry name" value="ATP-DEPENDENT RNA HELICASE"/>
    <property type="match status" value="1"/>
</dbReference>
<dbReference type="PANTHER" id="PTHR18934:SF119">
    <property type="entry name" value="ATP-DEPENDENT RNA HELICASE A"/>
    <property type="match status" value="1"/>
</dbReference>
<dbReference type="Pfam" id="PF00270">
    <property type="entry name" value="DEAD"/>
    <property type="match status" value="1"/>
</dbReference>
<dbReference type="Pfam" id="PF00035">
    <property type="entry name" value="dsrm"/>
    <property type="match status" value="2"/>
</dbReference>
<dbReference type="Pfam" id="PF21010">
    <property type="entry name" value="HA2_C"/>
    <property type="match status" value="1"/>
</dbReference>
<dbReference type="Pfam" id="PF04408">
    <property type="entry name" value="HA2_N"/>
    <property type="match status" value="1"/>
</dbReference>
<dbReference type="Pfam" id="PF00271">
    <property type="entry name" value="Helicase_C"/>
    <property type="match status" value="1"/>
</dbReference>
<dbReference type="Pfam" id="PF07717">
    <property type="entry name" value="OB_NTP_bind"/>
    <property type="match status" value="1"/>
</dbReference>
<dbReference type="SMART" id="SM00487">
    <property type="entry name" value="DEXDc"/>
    <property type="match status" value="1"/>
</dbReference>
<dbReference type="SMART" id="SM00358">
    <property type="entry name" value="DSRM"/>
    <property type="match status" value="2"/>
</dbReference>
<dbReference type="SMART" id="SM00847">
    <property type="entry name" value="HA2"/>
    <property type="match status" value="1"/>
</dbReference>
<dbReference type="SMART" id="SM00490">
    <property type="entry name" value="HELICc"/>
    <property type="match status" value="1"/>
</dbReference>
<dbReference type="SUPFAM" id="SSF54768">
    <property type="entry name" value="dsRNA-binding domain-like"/>
    <property type="match status" value="2"/>
</dbReference>
<dbReference type="SUPFAM" id="SSF52540">
    <property type="entry name" value="P-loop containing nucleoside triphosphate hydrolases"/>
    <property type="match status" value="1"/>
</dbReference>
<dbReference type="PROSITE" id="PS00690">
    <property type="entry name" value="DEAH_ATP_HELICASE"/>
    <property type="match status" value="1"/>
</dbReference>
<dbReference type="PROSITE" id="PS50137">
    <property type="entry name" value="DS_RBD"/>
    <property type="match status" value="2"/>
</dbReference>
<dbReference type="PROSITE" id="PS51192">
    <property type="entry name" value="HELICASE_ATP_BIND_1"/>
    <property type="match status" value="1"/>
</dbReference>
<dbReference type="PROSITE" id="PS51194">
    <property type="entry name" value="HELICASE_CTER"/>
    <property type="match status" value="1"/>
</dbReference>
<gene>
    <name evidence="21" type="primary">Dhx9</name>
    <name evidence="1" type="synonym">Ddx9</name>
</gene>
<sequence length="1380" mass="149475">MGDIKNFLYAWCGKRKMTPAYEIRAVGNKNRQKFMCEVRVEGFNYAGMGNSTNKKDAQSNAARDFVNYLVRINEVKSEEVPAVGIVPPPPILSDTSDSTASAAEGLPAPMGGPLPPHLALKAEENNSGVESSGYGSPGPTWDRGANLKDYYSRKEEQEVQATLESEEVDLNAGLHGNWTLENAKARLNQYFQKEKIQGEYKYTQVGPDHNRSFIAEMTIYIKQLGRRIFAREHGSNKKLAAQSCALSLVRQLYHLGVIEAYSGLTKKKEGERVEPYKVFLSPDLELQLQNVVQELDLEIVPPPVDPSMPVILNIGKLAHFEPSQRQNAVGVVPWSPPQSNWNPWTSSNIDEGPLAYASTEQISMDLKNELTYQMEQDHNLQSVLQERELLPVKKFEAEILEAISSNSVVIIRGATGCGKTTQVPQYILDDFIQNDRAAECNIVVTQPRRISAVAVAERVAYERGEEPGKSCGYSVRFESILPRPHASIMFCTVGVLLRKLEAGIRGISHVIVDEIHERDINTDFLLVVLRDVVLAYPEVRIVLMSATIDTTMFCEYFFNCPIIEVYGRTFPVQEYFLEDCIQMTQFIPPPKDKKKKDKEDDGGEDDDANCNLICGDEYGPETKLSMSQLNEKETPFELIEALLKYIETLNVPGAVLVFLPGWNLIYTMQKHLENNSHFGSHRYQILPLHSQIPREEQRKVFDPVPDGVTKVILSTNIAETSITINDVVYVIDSCKQKVKLFTAHNNMTNYATVWASKTNLEQRKGRAGRVRPGFCFHLCSRARFDRLETHMTPEMFRTPLHEIALSIKLLRLGGIGQFLAKAIEPPPLDAIIEAEHTLRELDALDANDELTPLGRILAKLPIEPRFGKMMIMGCIFYVGDAVCTISAATCFPEPFISEGKRLGYIHRNFAGNRFSDHVALLSVFQAWDDARMSGEEAEIRFCEQKRLNMATLRMTWEAKVQLKEILINSGFPEDCLLTQVFTNTGPDNNLDVVISLLAFGVYPNVCYHKEKRKILTTEGRNALIHKSSVNCPFSSQDMKYPSPFFVFGEKIRTRAISAKGMTLVTPLQLLLFASKKVQSDGQIVFIDDWIRLQISHEAAACITIRAAMEALVVEVSKQPNIISQLDPVNEHMLNTIRQISRPSAAGINLMIGSVRYGDGPRPPKMARYDNGSGYRRGYGGGGYGGGGYGGGYGSGGFGGGFGSGGGFGGGFNSGGGGFGSGGGGFGSGGGGFGGGGGGFSGGGGGGFGGGRGGGGGGFGGSGGFGNGGGGYGVGGGGYGGGGGGGYGGGSGGYGGGGYGGGEGYSISPNSYRGNYGGGGGGYRGGSQGGYRNNFGGDYRGSSGDYRGSGGGYRGSGGFQRRGYGGGYFGQGRGGGGGGGY</sequence>
<name>DHX9_MOUSE</name>
<reference key="1">
    <citation type="journal article" date="1998" name="Genomics">
        <title>Molecular analysis of the cDNA and genomic DNA encoding mouse RNA helicase A.</title>
        <authorList>
            <person name="Lee C.-G."/>
            <person name="Eki T."/>
            <person name="Okumura K."/>
            <person name="da Costa Soares V."/>
            <person name="Hurwitz J."/>
        </authorList>
    </citation>
    <scope>NUCLEOTIDE SEQUENCE [MRNA] (ISOFORM 1)</scope>
    <scope>NUCLEOTIDE SEQUENCE [GENOMIC DNA] OF 1-161</scope>
    <source>
        <strain>129/Sv</strain>
    </source>
</reference>
<reference key="2">
    <citation type="journal article" date="2003" name="PLoS Biol.">
        <title>Transcriptome analysis of mouse stem cells and early embryos.</title>
        <authorList>
            <person name="Sharov A.A."/>
            <person name="Piao Y."/>
            <person name="Matoba R."/>
            <person name="Dudekula D.B."/>
            <person name="Qian Y."/>
            <person name="VanBuren V."/>
            <person name="Falco G."/>
            <person name="Martin P.R."/>
            <person name="Stagg C.A."/>
            <person name="Bassey U.C."/>
            <person name="Wang Y."/>
            <person name="Carter M.G."/>
            <person name="Hamatani T."/>
            <person name="Aiba K."/>
            <person name="Akutsu H."/>
            <person name="Sharova L."/>
            <person name="Tanaka T.S."/>
            <person name="Kimber W.L."/>
            <person name="Yoshikawa T."/>
            <person name="Jaradat S.A."/>
            <person name="Pantano S."/>
            <person name="Nagaraja R."/>
            <person name="Boheler K.R."/>
            <person name="Taub D."/>
            <person name="Hodes R.J."/>
            <person name="Longo D.L."/>
            <person name="Schlessinger D."/>
            <person name="Keller J."/>
            <person name="Klotz E."/>
            <person name="Kelsoe G."/>
            <person name="Umezawa A."/>
            <person name="Vescovi A.L."/>
            <person name="Rossant J."/>
            <person name="Kunath T."/>
            <person name="Hogan B.L.M."/>
            <person name="Curci A."/>
            <person name="D'Urso M."/>
            <person name="Kelso J."/>
            <person name="Hide W."/>
            <person name="Ko M.S.H."/>
        </authorList>
    </citation>
    <scope>NUCLEOTIDE SEQUENCE [LARGE SCALE MRNA] OF 1-756 (ISOFORM 3)</scope>
    <source>
        <strain>C57BL/6NCr</strain>
    </source>
</reference>
<reference key="3">
    <citation type="journal article" date="2004" name="Genome Res.">
        <title>The status, quality, and expansion of the NIH full-length cDNA project: the Mammalian Gene Collection (MGC).</title>
        <authorList>
            <consortium name="The MGC Project Team"/>
        </authorList>
    </citation>
    <scope>NUCLEOTIDE SEQUENCE [LARGE SCALE MRNA] OF 1-756 (ISOFORM 1)</scope>
    <source>
        <strain>C57BL/6J</strain>
        <tissue>Embryonic germ cell</tissue>
    </source>
</reference>
<reference key="4">
    <citation type="journal article" date="2005" name="Science">
        <title>The transcriptional landscape of the mammalian genome.</title>
        <authorList>
            <person name="Carninci P."/>
            <person name="Kasukawa T."/>
            <person name="Katayama S."/>
            <person name="Gough J."/>
            <person name="Frith M.C."/>
            <person name="Maeda N."/>
            <person name="Oyama R."/>
            <person name="Ravasi T."/>
            <person name="Lenhard B."/>
            <person name="Wells C."/>
            <person name="Kodzius R."/>
            <person name="Shimokawa K."/>
            <person name="Bajic V.B."/>
            <person name="Brenner S.E."/>
            <person name="Batalov S."/>
            <person name="Forrest A.R."/>
            <person name="Zavolan M."/>
            <person name="Davis M.J."/>
            <person name="Wilming L.G."/>
            <person name="Aidinis V."/>
            <person name="Allen J.E."/>
            <person name="Ambesi-Impiombato A."/>
            <person name="Apweiler R."/>
            <person name="Aturaliya R.N."/>
            <person name="Bailey T.L."/>
            <person name="Bansal M."/>
            <person name="Baxter L."/>
            <person name="Beisel K.W."/>
            <person name="Bersano T."/>
            <person name="Bono H."/>
            <person name="Chalk A.M."/>
            <person name="Chiu K.P."/>
            <person name="Choudhary V."/>
            <person name="Christoffels A."/>
            <person name="Clutterbuck D.R."/>
            <person name="Crowe M.L."/>
            <person name="Dalla E."/>
            <person name="Dalrymple B.P."/>
            <person name="de Bono B."/>
            <person name="Della Gatta G."/>
            <person name="di Bernardo D."/>
            <person name="Down T."/>
            <person name="Engstrom P."/>
            <person name="Fagiolini M."/>
            <person name="Faulkner G."/>
            <person name="Fletcher C.F."/>
            <person name="Fukushima T."/>
            <person name="Furuno M."/>
            <person name="Futaki S."/>
            <person name="Gariboldi M."/>
            <person name="Georgii-Hemming P."/>
            <person name="Gingeras T.R."/>
            <person name="Gojobori T."/>
            <person name="Green R.E."/>
            <person name="Gustincich S."/>
            <person name="Harbers M."/>
            <person name="Hayashi Y."/>
            <person name="Hensch T.K."/>
            <person name="Hirokawa N."/>
            <person name="Hill D."/>
            <person name="Huminiecki L."/>
            <person name="Iacono M."/>
            <person name="Ikeo K."/>
            <person name="Iwama A."/>
            <person name="Ishikawa T."/>
            <person name="Jakt M."/>
            <person name="Kanapin A."/>
            <person name="Katoh M."/>
            <person name="Kawasawa Y."/>
            <person name="Kelso J."/>
            <person name="Kitamura H."/>
            <person name="Kitano H."/>
            <person name="Kollias G."/>
            <person name="Krishnan S.P."/>
            <person name="Kruger A."/>
            <person name="Kummerfeld S.K."/>
            <person name="Kurochkin I.V."/>
            <person name="Lareau L.F."/>
            <person name="Lazarevic D."/>
            <person name="Lipovich L."/>
            <person name="Liu J."/>
            <person name="Liuni S."/>
            <person name="McWilliam S."/>
            <person name="Madan Babu M."/>
            <person name="Madera M."/>
            <person name="Marchionni L."/>
            <person name="Matsuda H."/>
            <person name="Matsuzawa S."/>
            <person name="Miki H."/>
            <person name="Mignone F."/>
            <person name="Miyake S."/>
            <person name="Morris K."/>
            <person name="Mottagui-Tabar S."/>
            <person name="Mulder N."/>
            <person name="Nakano N."/>
            <person name="Nakauchi H."/>
            <person name="Ng P."/>
            <person name="Nilsson R."/>
            <person name="Nishiguchi S."/>
            <person name="Nishikawa S."/>
            <person name="Nori F."/>
            <person name="Ohara O."/>
            <person name="Okazaki Y."/>
            <person name="Orlando V."/>
            <person name="Pang K.C."/>
            <person name="Pavan W.J."/>
            <person name="Pavesi G."/>
            <person name="Pesole G."/>
            <person name="Petrovsky N."/>
            <person name="Piazza S."/>
            <person name="Reed J."/>
            <person name="Reid J.F."/>
            <person name="Ring B.Z."/>
            <person name="Ringwald M."/>
            <person name="Rost B."/>
            <person name="Ruan Y."/>
            <person name="Salzberg S.L."/>
            <person name="Sandelin A."/>
            <person name="Schneider C."/>
            <person name="Schoenbach C."/>
            <person name="Sekiguchi K."/>
            <person name="Semple C.A."/>
            <person name="Seno S."/>
            <person name="Sessa L."/>
            <person name="Sheng Y."/>
            <person name="Shibata Y."/>
            <person name="Shimada H."/>
            <person name="Shimada K."/>
            <person name="Silva D."/>
            <person name="Sinclair B."/>
            <person name="Sperling S."/>
            <person name="Stupka E."/>
            <person name="Sugiura K."/>
            <person name="Sultana R."/>
            <person name="Takenaka Y."/>
            <person name="Taki K."/>
            <person name="Tammoja K."/>
            <person name="Tan S.L."/>
            <person name="Tang S."/>
            <person name="Taylor M.S."/>
            <person name="Tegner J."/>
            <person name="Teichmann S.A."/>
            <person name="Ueda H.R."/>
            <person name="van Nimwegen E."/>
            <person name="Verardo R."/>
            <person name="Wei C.L."/>
            <person name="Yagi K."/>
            <person name="Yamanishi H."/>
            <person name="Zabarovsky E."/>
            <person name="Zhu S."/>
            <person name="Zimmer A."/>
            <person name="Hide W."/>
            <person name="Bult C."/>
            <person name="Grimmond S.M."/>
            <person name="Teasdale R.D."/>
            <person name="Liu E.T."/>
            <person name="Brusic V."/>
            <person name="Quackenbush J."/>
            <person name="Wahlestedt C."/>
            <person name="Mattick J.S."/>
            <person name="Hume D.A."/>
            <person name="Kai C."/>
            <person name="Sasaki D."/>
            <person name="Tomaru Y."/>
            <person name="Fukuda S."/>
            <person name="Kanamori-Katayama M."/>
            <person name="Suzuki M."/>
            <person name="Aoki J."/>
            <person name="Arakawa T."/>
            <person name="Iida J."/>
            <person name="Imamura K."/>
            <person name="Itoh M."/>
            <person name="Kato T."/>
            <person name="Kawaji H."/>
            <person name="Kawagashira N."/>
            <person name="Kawashima T."/>
            <person name="Kojima M."/>
            <person name="Kondo S."/>
            <person name="Konno H."/>
            <person name="Nakano K."/>
            <person name="Ninomiya N."/>
            <person name="Nishio T."/>
            <person name="Okada M."/>
            <person name="Plessy C."/>
            <person name="Shibata K."/>
            <person name="Shiraki T."/>
            <person name="Suzuki S."/>
            <person name="Tagami M."/>
            <person name="Waki K."/>
            <person name="Watahiki A."/>
            <person name="Okamura-Oho Y."/>
            <person name="Suzuki H."/>
            <person name="Kawai J."/>
            <person name="Hayashizaki Y."/>
        </authorList>
    </citation>
    <scope>NUCLEOTIDE SEQUENCE [LARGE SCALE MRNA] OF 1-264 (ISOFORM 2)</scope>
    <source>
        <strain>C57BL/6J</strain>
        <tissue>Embryo</tissue>
    </source>
</reference>
<reference key="5">
    <citation type="submission" date="1997-03" db="EMBL/GenBank/DDBJ databases">
        <title>mHEL-5.</title>
        <authorList>
            <person name="Kisielow P."/>
            <person name="Miazek A."/>
        </authorList>
    </citation>
    <scope>NUCLEOTIDE SEQUENCE OF 386-919 (ISOFORMS 1/2/3)</scope>
    <source>
        <strain>C57BL/6J</strain>
    </source>
</reference>
<reference key="6">
    <citation type="journal article" date="1999" name="J. Cell Sci.">
        <title>Nucleolar localization of murine nuclear DNA helicase II (RNA helicase A).</title>
        <authorList>
            <person name="Zhang S."/>
            <person name="Herrmann C."/>
            <person name="Grosse F."/>
        </authorList>
    </citation>
    <scope>SUBCELLULAR LOCATION</scope>
</reference>
<reference key="7">
    <citation type="journal article" date="2007" name="Biochem. Biophys. Res. Commun.">
        <title>The transcriptional factor Osterix directly interacts with RNA helicase A.</title>
        <authorList>
            <person name="Amorim B.R."/>
            <person name="Okamura H."/>
            <person name="Yoshida K."/>
            <person name="Qiu L."/>
            <person name="Morimoto H."/>
            <person name="Haneji T."/>
        </authorList>
    </citation>
    <scope>INTERACTION WITH SP7</scope>
    <scope>SUBCELLULAR LOCATION</scope>
</reference>
<reference key="8">
    <citation type="journal article" date="2007" name="J. Biol. Chem.">
        <title>ZIC2-dependent transcriptional regulation is mediated by DNA-dependent protein kinase, poly(ADP-ribose) polymerase, and RNA helicase A.</title>
        <authorList>
            <person name="Ishiguro A."/>
            <person name="Ideta M."/>
            <person name="Mikoshiba K."/>
            <person name="Chen D.J."/>
            <person name="Aruga J."/>
        </authorList>
    </citation>
    <scope>INTERACTION WITH ZIC2</scope>
</reference>
<reference key="9">
    <citation type="journal article" date="2007" name="Proc. Natl. Acad. Sci. U.S.A.">
        <title>Large-scale phosphorylation analysis of mouse liver.</title>
        <authorList>
            <person name="Villen J."/>
            <person name="Beausoleil S.A."/>
            <person name="Gerber S.A."/>
            <person name="Gygi S.P."/>
        </authorList>
    </citation>
    <scope>PHOSPHORYLATION [LARGE SCALE ANALYSIS] AT SER-137 (ISOFORM 2)</scope>
    <scope>IDENTIFICATION BY MASS SPECTROMETRY [LARGE SCALE ANALYSIS]</scope>
    <source>
        <tissue>Liver</tissue>
    </source>
</reference>
<reference key="10">
    <citation type="journal article" date="2008" name="J. Proteome Res.">
        <title>Specific phosphopeptide enrichment with immobilized titanium ion affinity chromatography adsorbent for phosphoproteome analysis.</title>
        <authorList>
            <person name="Zhou H."/>
            <person name="Ye M."/>
            <person name="Dong J."/>
            <person name="Han G."/>
            <person name="Jiang X."/>
            <person name="Wu R."/>
            <person name="Zou H."/>
        </authorList>
    </citation>
    <scope>PHOSPHORYLATION [LARGE SCALE ANALYSIS] AT SER-137 (ISOFORM 2)</scope>
    <scope>IDENTIFICATION BY MASS SPECTROMETRY [LARGE SCALE ANALYSIS]</scope>
    <source>
        <tissue>Liver</tissue>
    </source>
</reference>
<reference key="11">
    <citation type="journal article" date="2009" name="PLoS Pathog.">
        <title>An antiviral response directed by PKR phosphorylation of the RNA helicase A.</title>
        <authorList>
            <person name="Sadler A.J."/>
            <person name="Latchoumanin O."/>
            <person name="Hawkes D."/>
            <person name="Mak J."/>
            <person name="Williams B.R."/>
        </authorList>
    </citation>
    <scope>IDENTIFICATION BY MASS SPECTROMETRY</scope>
    <scope>INTERACTION WITH EIF2AK2</scope>
    <scope>PHOSPHORYLATION</scope>
</reference>
<reference key="12">
    <citation type="journal article" date="2010" name="Cell">
        <title>A tissue-specific atlas of mouse protein phosphorylation and expression.</title>
        <authorList>
            <person name="Huttlin E.L."/>
            <person name="Jedrychowski M.P."/>
            <person name="Elias J.E."/>
            <person name="Goswami T."/>
            <person name="Rad R."/>
            <person name="Beausoleil S.A."/>
            <person name="Villen J."/>
            <person name="Haas W."/>
            <person name="Sowa M.E."/>
            <person name="Gygi S.P."/>
        </authorList>
    </citation>
    <scope>PHOSPHORYLATION [LARGE SCALE ANALYSIS] AT SER-136</scope>
    <scope>PHOSPHORYLATION [LARGE SCALE ANALYSIS] AT SER-137 (ISOFORM 2)</scope>
    <scope>IDENTIFICATION BY MASS SPECTROMETRY [LARGE SCALE ANALYSIS]</scope>
    <source>
        <tissue>Brain</tissue>
        <tissue>Brown adipose tissue</tissue>
        <tissue>Kidney</tissue>
        <tissue>Liver</tissue>
        <tissue>Lung</tissue>
        <tissue>Pancreas</tissue>
        <tissue>Spleen</tissue>
        <tissue>Testis</tissue>
    </source>
</reference>
<reference key="13">
    <citation type="journal article" date="2012" name="Science">
        <title>Feedback regulation of transcriptional termination by the mammalian circadian clock PERIOD complex.</title>
        <authorList>
            <person name="Padmanabhan K."/>
            <person name="Robles M.S."/>
            <person name="Westerling T."/>
            <person name="Weitz C.J."/>
        </authorList>
    </citation>
    <scope>FUNCTION IN CIRCADIAN RHYTHMS</scope>
    <scope>IDENTIFICATION IN A LARGE PER COMPLEX</scope>
</reference>
<reference key="14">
    <citation type="journal article" date="2013" name="Mol. Cell">
        <title>SIRT5-mediated lysine desuccinylation impacts diverse metabolic pathways.</title>
        <authorList>
            <person name="Park J."/>
            <person name="Chen Y."/>
            <person name="Tishkoff D.X."/>
            <person name="Peng C."/>
            <person name="Tan M."/>
            <person name="Dai L."/>
            <person name="Xie Z."/>
            <person name="Zhang Y."/>
            <person name="Zwaans B.M."/>
            <person name="Skinner M.E."/>
            <person name="Lombard D.B."/>
            <person name="Zhao Y."/>
        </authorList>
    </citation>
    <scope>ACETYLATION [LARGE SCALE ANALYSIS] AT LYS-148</scope>
    <scope>IDENTIFICATION BY MASS SPECTROMETRY [LARGE SCALE ANALYSIS]</scope>
    <source>
        <tissue>Embryonic fibroblast</tissue>
    </source>
</reference>
<reference key="15">
    <citation type="journal article" date="2014" name="Mol. Cell. Proteomics">
        <title>Immunoaffinity enrichment and mass spectrometry analysis of protein methylation.</title>
        <authorList>
            <person name="Guo A."/>
            <person name="Gu H."/>
            <person name="Zhou J."/>
            <person name="Mulhern D."/>
            <person name="Wang Y."/>
            <person name="Lee K.A."/>
            <person name="Yang V."/>
            <person name="Aguiar M."/>
            <person name="Kornhauser J."/>
            <person name="Jia X."/>
            <person name="Ren J."/>
            <person name="Beausoleil S.A."/>
            <person name="Silva J.C."/>
            <person name="Vemulapalli V."/>
            <person name="Bedford M.T."/>
            <person name="Comb M.J."/>
        </authorList>
    </citation>
    <scope>METHYLATION [LARGE SCALE ANALYSIS] AT ARG-1167; ARG-1312; ARG-1323; ARG-1339; ARG-1346; ARG-1353; ARG-1361 AND ARG-1372</scope>
    <scope>IDENTIFICATION BY MASS SPECTROMETRY [LARGE SCALE ANALYSIS]</scope>
    <source>
        <tissue>Brain</tissue>
        <tissue>Embryo</tissue>
    </source>
</reference>
<reference key="16">
    <citation type="journal article" date="2017" name="Nature">
        <title>DHX9 suppresses RNA processing defects originating from the Alu invasion of the human genome.</title>
        <authorList>
            <person name="Aktas T."/>
            <person name="Avsar Ilik I."/>
            <person name="Maticzka D."/>
            <person name="Bhardwaj V."/>
            <person name="Pessoa Rodrigues C."/>
            <person name="Mittler G."/>
            <person name="Manke T."/>
            <person name="Backofen R."/>
            <person name="Akhtar A."/>
        </authorList>
    </citation>
    <scope>FUNCTION</scope>
    <scope>INTERACTION WITH ADAR</scope>
    <scope>ALU RNA-BINDING</scope>
</reference>
<reference key="17">
    <citation type="journal article" date="2017" name="Nature">
        <title>Nlrp9b inflammasome restricts rotavirus infection in intestinal epithelial cells.</title>
        <authorList>
            <person name="Zhu S."/>
            <person name="Ding S."/>
            <person name="Wang P."/>
            <person name="Wei Z."/>
            <person name="Pan W."/>
            <person name="Palm N.W."/>
            <person name="Yang Y."/>
            <person name="Yu H."/>
            <person name="Li H.B."/>
            <person name="Wang G."/>
            <person name="Lei X."/>
            <person name="de Zoete M.R."/>
            <person name="Zhao J."/>
            <person name="Zheng Y."/>
            <person name="Chen H."/>
            <person name="Zhao Y."/>
            <person name="Jurado K.A."/>
            <person name="Feng N."/>
            <person name="Shan L."/>
            <person name="Kluger Y."/>
            <person name="Lu J."/>
            <person name="Abraham C."/>
            <person name="Fikrig E."/>
            <person name="Greenberg H.B."/>
            <person name="Flavell R.A."/>
        </authorList>
    </citation>
    <scope>FUNCTION</scope>
</reference>
<reference key="18">
    <citation type="submission" date="2004-11" db="PDB data bank">
        <title>Solution structure of double-stranded RNA-binding motifs from hypothetical protein BAB28848.</title>
        <authorList>
            <consortium name="RIKEN structural genomics initiative (RSGI)"/>
        </authorList>
    </citation>
    <scope>STRUCTURE BY NMR OF 4-262</scope>
</reference>
<reference key="19">
    <citation type="journal article" date="2023" name="Am. J. Hum. Genet.">
        <title>Monoallelic variation in DHX9, the gene encoding the DExH-box helicase DHX9, underlies neurodevelopment disorders and Charcot-Marie-Tooth disease.</title>
        <authorList>
            <consortium name="Undiagnosed Diseases Network"/>
            <person name="Calame D.G."/>
            <person name="Guo T."/>
            <person name="Wang C."/>
            <person name="Garrett L."/>
            <person name="Jolly A."/>
            <person name="Dawood M."/>
            <person name="Kurolap A."/>
            <person name="Henig N.Z."/>
            <person name="Fatih J.M."/>
            <person name="Herman I."/>
            <person name="Du H."/>
            <person name="Mitani T."/>
            <person name="Becker L."/>
            <person name="Rathkolb B."/>
            <person name="Gerlini R."/>
            <person name="Seisenberger C."/>
            <person name="Marschall S."/>
            <person name="Hunter J.V."/>
            <person name="Gerard A."/>
            <person name="Heidlebaugh A."/>
            <person name="Challman T."/>
            <person name="Spillmann R.C."/>
            <person name="Jhangiani S.N."/>
            <person name="Coban-Akdemir Z."/>
            <person name="Lalani S."/>
            <person name="Liu L."/>
            <person name="Revah-Politi A."/>
            <person name="Iglesias A."/>
            <person name="Guzman E."/>
            <person name="Baugh E."/>
            <person name="Boddaert N."/>
            <person name="Rondeau S."/>
            <person name="Ormieres C."/>
            <person name="Barcia G."/>
            <person name="Tan Q.K.G."/>
            <person name="Thiffault I."/>
            <person name="Pastinen T."/>
            <person name="Sheikh K."/>
            <person name="Biliciler S."/>
            <person name="Mei D."/>
            <person name="Melani F."/>
            <person name="Shashi V."/>
            <person name="Yaron Y."/>
            <person name="Steele M."/>
            <person name="Wakeling E."/>
            <person name="Oestergaard E."/>
            <person name="Nazaryan-Petersen L."/>
            <person name="Millan F."/>
            <person name="Santiago-Sim T."/>
            <person name="Thevenon J."/>
            <person name="Bruel A.L."/>
            <person name="Thauvin-Robinet C."/>
            <person name="Popp D."/>
            <person name="Platzer K."/>
            <person name="Gawlinski P."/>
            <person name="Wiszniewski W."/>
            <person name="Marafi D."/>
            <person name="Pehlivan D."/>
            <person name="Posey J.E."/>
            <person name="Gibbs R.A."/>
            <person name="Gailus-Durner V."/>
            <person name="Guerrini R."/>
            <person name="Fuchs H."/>
            <person name="Hrabe de Angelis M."/>
            <person name="Hoelter S.M."/>
            <person name="Cheung H.H."/>
            <person name="Gu S."/>
            <person name="Lupski J.R."/>
        </authorList>
    </citation>
    <scope>DISRUPTION PHENOTYPE</scope>
</reference>
<reference key="20">
    <citation type="journal article" date="2023" name="Eur. J. Med. Genet.">
        <title>Heterozygous loss-of-function DHX9 variants are associated with neurodevelopmental disorders: Human genetic and experimental evidences.</title>
        <authorList>
            <person name="Yamada M."/>
            <person name="Nitta Y."/>
            <person name="Uehara T."/>
            <person name="Suzuki H."/>
            <person name="Miya F."/>
            <person name="Takenouchi T."/>
            <person name="Tamura M."/>
            <person name="Ayabe S."/>
            <person name="Yoshiki A."/>
            <person name="Maeno A."/>
            <person name="Saga Y."/>
            <person name="Furuse T."/>
            <person name="Yamada I."/>
            <person name="Okamoto N."/>
            <person name="Kosaki K."/>
            <person name="Sugie A."/>
        </authorList>
    </citation>
    <scope>MUTAGENESIS OF GLY-416</scope>
</reference>
<reference key="21">
    <citation type="journal article" date="2008" name="FEBS Lett.">
        <title>Functional role of Zic2 phosphorylation in transcriptional regulation.</title>
        <authorList>
            <person name="Ishiguro A."/>
            <person name="Aruga J."/>
        </authorList>
    </citation>
    <scope>INTERACTION WITH ZIC2</scope>
</reference>
<proteinExistence type="evidence at protein level"/>
<organism>
    <name type="scientific">Mus musculus</name>
    <name type="common">Mouse</name>
    <dbReference type="NCBI Taxonomy" id="10090"/>
    <lineage>
        <taxon>Eukaryota</taxon>
        <taxon>Metazoa</taxon>
        <taxon>Chordata</taxon>
        <taxon>Craniata</taxon>
        <taxon>Vertebrata</taxon>
        <taxon>Euteleostomi</taxon>
        <taxon>Mammalia</taxon>
        <taxon>Eutheria</taxon>
        <taxon>Euarchontoglires</taxon>
        <taxon>Glires</taxon>
        <taxon>Rodentia</taxon>
        <taxon>Myomorpha</taxon>
        <taxon>Muroidea</taxon>
        <taxon>Muridae</taxon>
        <taxon>Murinae</taxon>
        <taxon>Mus</taxon>
        <taxon>Mus</taxon>
    </lineage>
</organism>
<evidence type="ECO:0000250" key="1">
    <source>
        <dbReference type="UniProtKB" id="Q08211"/>
    </source>
</evidence>
<evidence type="ECO:0000255" key="2"/>
<evidence type="ECO:0000255" key="3">
    <source>
        <dbReference type="PROSITE-ProRule" id="PRU00266"/>
    </source>
</evidence>
<evidence type="ECO:0000255" key="4">
    <source>
        <dbReference type="PROSITE-ProRule" id="PRU00541"/>
    </source>
</evidence>
<evidence type="ECO:0000255" key="5">
    <source>
        <dbReference type="PROSITE-ProRule" id="PRU00542"/>
    </source>
</evidence>
<evidence type="ECO:0000256" key="6">
    <source>
        <dbReference type="SAM" id="MobiDB-lite"/>
    </source>
</evidence>
<evidence type="ECO:0000269" key="7">
    <source>
    </source>
</evidence>
<evidence type="ECO:0000269" key="8">
    <source>
    </source>
</evidence>
<evidence type="ECO:0000269" key="9">
    <source>
    </source>
</evidence>
<evidence type="ECO:0000269" key="10">
    <source>
    </source>
</evidence>
<evidence type="ECO:0000269" key="11">
    <source>
    </source>
</evidence>
<evidence type="ECO:0000269" key="12">
    <source>
    </source>
</evidence>
<evidence type="ECO:0000269" key="13">
    <source>
    </source>
</evidence>
<evidence type="ECO:0000269" key="14">
    <source>
    </source>
</evidence>
<evidence type="ECO:0000269" key="15">
    <source>
    </source>
</evidence>
<evidence type="ECO:0000303" key="16">
    <source>
    </source>
</evidence>
<evidence type="ECO:0000303" key="17">
    <source>
    </source>
</evidence>
<evidence type="ECO:0000303" key="18">
    <source>
    </source>
</evidence>
<evidence type="ECO:0000303" key="19">
    <source ref="5"/>
</evidence>
<evidence type="ECO:0000305" key="20"/>
<evidence type="ECO:0000312" key="21">
    <source>
        <dbReference type="MGI" id="MGI:108177"/>
    </source>
</evidence>
<evidence type="ECO:0007744" key="22">
    <source>
    </source>
</evidence>
<evidence type="ECO:0007744" key="23">
    <source>
    </source>
</evidence>
<evidence type="ECO:0007744" key="24">
    <source>
    </source>
</evidence>
<evidence type="ECO:0007744" key="25">
    <source>
    </source>
</evidence>
<evidence type="ECO:0007744" key="26">
    <source>
    </source>
</evidence>
<evidence type="ECO:0007829" key="27">
    <source>
        <dbReference type="PDB" id="1UIL"/>
    </source>
</evidence>
<evidence type="ECO:0007829" key="28">
    <source>
        <dbReference type="PDB" id="1WHQ"/>
    </source>
</evidence>
<comment type="function">
    <text evidence="1 11 12 13">Multifunctional ATP-dependent nucleic acid helicase that unwinds DNA and RNA in a 3' to 5' direction and that plays important roles in many processes, such as DNA replication, transcriptional activation, post-transcriptional RNA regulation, mRNA translation and RNA-mediated gene silencing. Requires a 3'-single-stranded tail as entry site for acid nuclei unwinding activities as well as the binding and hydrolyzing of any of the four ribo- or deoxyribo-nucleotide triphosphates (NTPs). Unwinds numerous nucleic acid substrates such as double-stranded (ds) DNA and RNA, DNA:RNA hybrids, DNA and RNA forks composed of either partially complementary DNA duplexes or DNA:RNA hybrids, respectively, and also DNA and RNA displacement loops (D- and R-loops), triplex-helical DNA (H-DNA) structure and DNA- and RNA-based G-quadruplexes. Binds dsDNA, single-stranded DNA (ssDNA), dsRNA, ssRNA and poly(A)-containing RNA. Also binds to circular dsDNA or dsRNA of either linear and/or circular forms and stimulates the relaxation of supercoiled DNAs catalyzed by topoisomerase TOP2A. Plays a role in DNA replication at origins of replication and cell cycle progression. Plays a role as a transcriptional coactivator acting as a bridging factor between polymerase II holoenzyme and transcription factors or cofactors, such as BRCA1, CREBBP, RELA and SMN1. Binds to the CDKN2A promoter. Plays several roles in post-transcriptional regulation of gene expression. In cooperation with NUP98, promotes pre-mRNA alternative splicing activities of a subset of genes (By similarity). As component of a large PER complex, is involved in the negative regulation of 3' transcriptional termination of circadian target genes such as PER1 and NR1D1 and the control of the circadian rhythms (PubMed:22767893). Also acts as a nuclear resolvase that is able to bind and neutralize harmful massive secondary double-stranded RNA structures formed by inverted-repeat Alu retrotransposon elements that are inserted and transcribed as parts of genes during the process of gene transposition (PubMed:28355180). Involved in the positive regulation of nuclear export of constitutive transport element (CTE)-containing unspliced mRNA. Component of the coding region determinant (CRD)-mediated complex that promotes cytoplasmic MYC mRNA stability. Plays a role in mRNA translation. Positively regulates translation of selected mRNAs through its binding to post-transcriptional control element (PCE) in the 5'-untranslated region (UTR). Involved with LARP6 in the translation stimulation of type I collagen mRNAs for CO1A1 and CO1A2 through binding of a specific stem-loop structure in their 5'-UTRs. Stimulates LIN28A-dependent mRNA translation probably by facilitating ribonucleoprotein remodeling during the process of translation. Also plays a role as a small interfering (siRNA)-loading factor involved in the RNA-induced silencing complex (RISC) loading complex (RLC) assembly, and hence functions in the RISC-mediated gene silencing process. Binds preferentially to short double-stranded RNA, such as those produced during rotavirus intestinal infection (PubMed:28636595). This interaction may mediate NLRP9 inflammasome activation and trigger inflammatory response, including IL18 release and pyroptosis (PubMed:28636595). Finally, mediates the attachment of heterogeneous nuclear ribonucleoproteins (hnRNPs) to actin filaments in the nucleus (By similarity).</text>
</comment>
<comment type="catalytic activity">
    <reaction evidence="1">
        <text>ATP + H2O = ADP + phosphate + H(+)</text>
        <dbReference type="Rhea" id="RHEA:13065"/>
        <dbReference type="ChEBI" id="CHEBI:15377"/>
        <dbReference type="ChEBI" id="CHEBI:15378"/>
        <dbReference type="ChEBI" id="CHEBI:30616"/>
        <dbReference type="ChEBI" id="CHEBI:43474"/>
        <dbReference type="ChEBI" id="CHEBI:456216"/>
        <dbReference type="EC" id="3.6.4.13"/>
    </reaction>
</comment>
<comment type="subunit">
    <text evidence="1 8 9 10 11 12">Component of the coding region determinant (CRD)-mediated complex, composed of DHX9, HNRNPU, IGF2BP1, SYNCRIP and YBX1. Identified in a mRNP complex, at least composed of DHX9, DDX3X, ELAVL1, HNRNPU, IGF2BP1, ILF3, PABPC1, PCBP2, PTBP2, STAU1, STAU2, SYNCRIP and YBX1. Identified in a IGF2BP1-dependent mRNP granule complex containing untranslated mRNAs (By similarity). The large PER complex involved in the repression of transcriptional termination is composed of at least PER2, CDK9, DDX5, DHX9, NCBP1 and POLR2A (active) (PubMed:22767893). Associates (via DRBM domains) with the RISC complex; this association occurs in a small interfering (siRNA)-dependent manner. Associates with the SMN complex; this association induces recruitment of DHX9 to the RNA polymerase II. Associates with polysomes in a LIN28A-dependent manner. Interacts (via C-terminus) with ACTB; this interaction is direct and mediates the attachment to nuclear ribonucleoprotein complexes (By similarity). Interacts with ADAR isoform 1; this interaction occurs in a RNA-independent manner (PubMed:28355180). Interacts (via DRBM domains) with AGO2 (via middle region); this interaction promotes active RISC assembly by promoting the association of siRNA with AGO2. Interacts (via NTD domain) with AKAP8L (via N-terminus). Interacts with BRCA1 (via C-terminus); this interaction is direct and links BRCA1 to the RNA polymerase II holoenzyme. Interacts (via N-terminus) with CREBBP; this interaction mediates association with RNA polymerase II holoenzyme and stimulates CREB-dependent transcriptional activation (By similarity). Interacts (via N-terminus) with EIF2AK2/PKR; this interaction is dependent upon the activation of the kinase (PubMed:19229320). Interacts (via DRBM domains) with DICER1. Interacts with H2AX; this interaction is direct, requires phosphorylation of histone H2AX on 'Ser-140' by PRKDC and promotes binding of DHX9 to transcriptionally stalled sites on chromosomal DNA in response to genotoxic stress. Interacts with HNRNPC; this interaction is direct, enhanced probably by their concomitant binding to RNA and mediates the attachment to actin filaments. Interacts (via NTD domain) with PRMT1. Interacts with IGF2BP1. Interacts with IGF2BP2, IGF2BP3. Interacts (via DRBM domains) with ILF3; this interaction occurs in a RNA-independent manner. Interacts with Importin alpha/Importin beta receptor. Interacts with LARP6 (via C-terminus); this interaction occurs in a mRNA-independent manner. Interacts (via N- and C-terminus) with LIN28A (via C-terminus); this interaction occurs in a RNA-independent manner. Interacts with LMX1B. Interacts (via helicase C-terminal domain, HA2 and OB-fold regions) with MAVS (via CARD domain); this interaction occurs in both resting and double-stranded RNA poly(I:C)-induced cells. Interacts with MBD2; this interaction stimulates transcriptional activation in a CREB-dependent manner. Interacts (via H2A and OB-fold regions) with MYD88 (via TIR domain); this interaction is direct. Interacts with NLRP9 upon rotavirus infection; this interaction may trigger NLRP9 inflammasome activation and inflammatory response. Interacts (via DRBM, OB-fold and RGG regions) with NUP98 (via N-terminus); this interaction occurs in a RNA-dependent manner and stimulates DHX9-mediated ATPase activity and regulates transcription and splicing of a subset of genes. Interacts (via N-terminus) with NXF1 (via N-terminus); this interaction is direct and negatively regulates NXF1-mediated nuclear export of constitutive transport element (CTE)-containing cellular mRNAs. Interacts with RELA; this interaction is direct and activates NF-kappa-B-mediated transcription. Interacts (via MTAD region) with RNA polymerase II holoenzyme; this interaction stimulates transcription activation in a CREB-dependent manner. Interacts (via RGG region) with SMN1; this interaction links SMN1 to the RNA polymerase II holoenzyme (By similarity). Interacts with SP7 (PubMed:17303075). Interacts (via DRBM domains) with TARBP2 (via DRBM first and second domains); this interaction occurs in a small interfering (siRNA)-dependent manner. Interacts with TOP2A; this interaction occurs in a E2 enzyme UBE2I- and RNA-dependent manner, negatively regulates DHX9-mediated double-stranded DNA and RNA duplex helicase activity and stimulates TOP2A-mediated supercoiled DNA relaxation activity. Interacts (via DRBM domains and C-terminus) with WRN (via 3'-5' exonuclease domain); this interaction inhibits the DNA-dependent NTPase and DNA helicase activities of DHX9 and stimulates the 3'-5' exonuclease activity of WRN. Interacts with XRCC5; this interaction occurs in a RNA-dependent manner (By similarity). Interacts with ZIC2 (via C2H2-type domain 3) (PubMed:17251188). Interacts with MCM3AP (By similarity).</text>
</comment>
<comment type="subcellular location">
    <subcellularLocation>
        <location evidence="9">Nucleus</location>
    </subcellularLocation>
    <subcellularLocation>
        <location evidence="1">Nucleus</location>
        <location evidence="1">Nucleoplasm</location>
    </subcellularLocation>
    <subcellularLocation>
        <location evidence="7">Nucleus</location>
        <location evidence="7">Nucleolus</location>
    </subcellularLocation>
    <subcellularLocation>
        <location evidence="1">Cytoplasm</location>
    </subcellularLocation>
    <subcellularLocation>
        <location evidence="1">Cytoplasm</location>
        <location evidence="1">Cytoskeleton</location>
        <location evidence="1">Microtubule organizing center</location>
        <location evidence="1">Centrosome</location>
    </subcellularLocation>
    <text evidence="1 9">Nucleoplasmic shuttling protein. Its nuclear import involves the nucleocytoplasmic transport receptor Importin alpha/Importin beta receptor pathway in a Ran-dependent manner. In interphase, localizes in nuclear stress granules and at perichromatin fibrils and in cytoplasmic ribonucleoprotein granules. Colocalizes with WRN and H2AX at centrosomes in a microtubule-dependent manner following DNA damaging agent treatment. Excluded from the mitotic nucleus as early as prophase and re-entered the nucleus at telophase. Recruited in diffuse and discrete intranuclear foci (GLFG-body) in a NUP98-dependent manner (By similarity). Colocalizes with SP7 in the nucleus (PubMed:17303075). Colocalizes with ACTB at nuclear actin filaments inside the nucleus or at the nuclear pore. Colocalizes with HNRNPC at nuclear ribonucleoprotein complex proteins in the nucleus. Localized in cytoplasmic mRNP granules containing untranslated mRNAs (By similarity).</text>
</comment>
<comment type="alternative products">
    <event type="alternative splicing"/>
    <isoform>
        <id>O70133-1</id>
        <name>1</name>
        <sequence type="displayed"/>
    </isoform>
    <isoform>
        <id>O70133-2</id>
        <name>2</name>
        <sequence type="described" ref="VSP_014779"/>
    </isoform>
    <isoform>
        <id>O70133-3</id>
        <name>3</name>
        <sequence type="described" ref="VSP_014778"/>
    </isoform>
</comment>
<comment type="domain">
    <text evidence="1">DRBM domains cooperate for the binding to nucleic acid but not for unwinding helicase activity. The helicase-associated domain-2 (HA2) region is essential for the duplex RNA unwinding helicase activity. The minimal transactivation region (MTAD) mediates interaction with the RNA polymerase II holoenzyme and stimulates transcriptional activation in a CREB-dependent manner. The oligonucleotide- or oligosaccharide-binding (OB-fold) and the repeated arginine and glycine-glycine (RGG) regions are dispensable for both RNA-binding and unwinding helicase activities. The RGG region contains both nuclear localization signal (NLS) and nuclear export signal (NES) and is necessary and sufficient for nucleocytoplasmic shuttling in a RNA-independent manner.</text>
</comment>
<comment type="PTM">
    <text evidence="1">Methylated. PRMT1-mediated methylation of undefined Arg residues in the nuclear transport domain (NTD) is required for nuclear import of DHX9.</text>
</comment>
<comment type="PTM">
    <text evidence="1">Phosphorylated by PRKDC; phosphorylation occurs in a RNA-dependent manner. Phosphorylated by EIF2AK2/PKR; this phosphorylation reduces its association with double-stranded RNA.</text>
</comment>
<comment type="disruption phenotype">
    <text evidence="15">Mice are viable but have behavioral and neurological abnormalities. They exhibit hypoactivity in novel environments, tremor, and sensorineural hearing loss.</text>
</comment>
<comment type="similarity">
    <text evidence="20">Belongs to the DEAD box helicase family. DEAH subfamily.</text>
</comment>
<comment type="sequence caution" evidence="20">
    <conflict type="frameshift">
        <sequence resource="EMBL-CDS" id="AAH89159"/>
    </conflict>
</comment>
<comment type="sequence caution" evidence="20">
    <conflict type="miscellaneous discrepancy">
        <sequence resource="EMBL-CDS" id="AAR87796"/>
    </conflict>
    <text>Intron retention.</text>
</comment>
<protein>
    <recommendedName>
        <fullName evidence="1">ATP-dependent RNA helicase A</fullName>
        <ecNumber evidence="1">3.6.4.13</ecNumber>
    </recommendedName>
    <alternativeName>
        <fullName evidence="19">DEAH box protein 9</fullName>
        <shortName evidence="19">mHEL-5</shortName>
    </alternativeName>
    <alternativeName>
        <fullName evidence="1">Nuclear DNA helicase II</fullName>
        <shortName evidence="1">NDH II</shortName>
    </alternativeName>
    <alternativeName>
        <fullName evidence="18">RNA helicase A</fullName>
        <shortName evidence="18">RHA</shortName>
    </alternativeName>
</protein>
<accession>O70133</accession>
<accession>O35931</accession>
<accession>O54703</accession>
<accession>Q5FWY1</accession>
<accession>Q6R5F7</accession>
<accession>Q9CSA2</accession>
<keyword id="KW-0002">3D-structure</keyword>
<keyword id="KW-0007">Acetylation</keyword>
<keyword id="KW-0010">Activator</keyword>
<keyword id="KW-0025">Alternative splicing</keyword>
<keyword id="KW-0067">ATP-binding</keyword>
<keyword id="KW-0090">Biological rhythms</keyword>
<keyword id="KW-0963">Cytoplasm</keyword>
<keyword id="KW-0206">Cytoskeleton</keyword>
<keyword id="KW-0238">DNA-binding</keyword>
<keyword id="KW-0347">Helicase</keyword>
<keyword id="KW-0378">Hydrolase</keyword>
<keyword id="KW-0391">Immunity</keyword>
<keyword id="KW-0395">Inflammatory response</keyword>
<keyword id="KW-0399">Innate immunity</keyword>
<keyword id="KW-1017">Isopeptide bond</keyword>
<keyword id="KW-0464">Manganese</keyword>
<keyword id="KW-0479">Metal-binding</keyword>
<keyword id="KW-0488">Methylation</keyword>
<keyword id="KW-0507">mRNA processing</keyword>
<keyword id="KW-0508">mRNA splicing</keyword>
<keyword id="KW-0509">mRNA transport</keyword>
<keyword id="KW-0547">Nucleotide-binding</keyword>
<keyword id="KW-0539">Nucleus</keyword>
<keyword id="KW-0597">Phosphoprotein</keyword>
<keyword id="KW-1185">Reference proteome</keyword>
<keyword id="KW-0677">Repeat</keyword>
<keyword id="KW-0694">RNA-binding</keyword>
<keyword id="KW-0943">RNA-mediated gene silencing</keyword>
<keyword id="KW-0804">Transcription</keyword>
<keyword id="KW-0805">Transcription regulation</keyword>
<keyword id="KW-0806">Transcription termination</keyword>
<keyword id="KW-0810">Translation regulation</keyword>
<keyword id="KW-0813">Transport</keyword>
<keyword id="KW-0832">Ubl conjugation</keyword>